<sequence>MELIPVLEPEQKPQNRHWYVLEPTGAAPGVSVGHTCSFLPAAHHHDEDGGGKGKIVIVGGANPSGSFADSYIINLDTHQWDLPDWEGLQARYEHCSFTPESEPQSLWVFGGAEKSTNRNCVQALRFSDGGEGRRFWQSVQVTGVPPSGRTYHTNSACVGNRLFVFSGGEAGSSAVTDAQLHVFDAVSVTWTQPDTTGTPPAQRHGHVITAVGSDIYIHGGMSGEKFHSDMFTLNTESLKWQKVKAKGDLPPGVAAHSSVTFNKNIFIFGGMTADGATNSMFKFQCDKQRWTLLKFEGDLPPGRLDHSMCLLPWRVKMEDSEHADVQHLCFVFGGMDTQGVIFNDCLVTVLT</sequence>
<reference key="1">
    <citation type="submission" date="2004-06" db="EMBL/GenBank/DDBJ databases">
        <authorList>
            <consortium name="NIH - Zebrafish Gene Collection (ZGC) project"/>
        </authorList>
    </citation>
    <scope>NUCLEOTIDE SEQUENCE [LARGE SCALE MRNA]</scope>
</reference>
<proteinExistence type="evidence at transcript level"/>
<gene>
    <name type="primary">rabepk</name>
    <name type="ORF">zgc:91813</name>
</gene>
<name>RABEK_DANRE</name>
<accession>Q6GQN7</accession>
<keyword id="KW-0880">Kelch repeat</keyword>
<keyword id="KW-1185">Reference proteome</keyword>
<keyword id="KW-0677">Repeat</keyword>
<protein>
    <recommendedName>
        <fullName>Rab9 effector protein with kelch motifs</fullName>
    </recommendedName>
</protein>
<evidence type="ECO:0000250" key="1"/>
<feature type="chain" id="PRO_0000280620" description="Rab9 effector protein with kelch motifs">
    <location>
        <begin position="1"/>
        <end position="351"/>
    </location>
</feature>
<feature type="repeat" description="Kelch 1">
    <location>
        <begin position="54"/>
        <end position="102"/>
    </location>
</feature>
<feature type="repeat" description="Kelch 2">
    <location>
        <begin position="105"/>
        <end position="156"/>
    </location>
</feature>
<feature type="repeat" description="Kelch 3">
    <location>
        <begin position="162"/>
        <end position="210"/>
    </location>
</feature>
<feature type="repeat" description="Kelch 4">
    <location>
        <begin position="214"/>
        <end position="263"/>
    </location>
</feature>
<feature type="repeat" description="Kelch 5">
    <location>
        <begin position="264"/>
        <end position="313"/>
    </location>
</feature>
<feature type="repeat" description="Kelch 6">
    <location>
        <begin position="328"/>
        <end position="351"/>
    </location>
</feature>
<comment type="function">
    <text evidence="1">Rab9 effector required for endosome to trans-Golgi network (TGN) transport.</text>
</comment>
<dbReference type="EMBL" id="BC072705">
    <property type="protein sequence ID" value="AAH72705.1"/>
    <property type="molecule type" value="mRNA"/>
</dbReference>
<dbReference type="RefSeq" id="NP_001002209.1">
    <property type="nucleotide sequence ID" value="NM_001002209.1"/>
</dbReference>
<dbReference type="RefSeq" id="XP_005171783.1">
    <property type="nucleotide sequence ID" value="XM_005171726.5"/>
</dbReference>
<dbReference type="SMR" id="Q6GQN7"/>
<dbReference type="FunCoup" id="Q6GQN7">
    <property type="interactions" value="1057"/>
</dbReference>
<dbReference type="STRING" id="7955.ENSDARP00000148548"/>
<dbReference type="PaxDb" id="7955-ENSDARP00000058270"/>
<dbReference type="Ensembl" id="ENSDART00000183882">
    <property type="protein sequence ID" value="ENSDARP00000148548"/>
    <property type="gene ID" value="ENSDARG00000112165"/>
</dbReference>
<dbReference type="GeneID" id="431756"/>
<dbReference type="KEGG" id="dre:431756"/>
<dbReference type="AGR" id="ZFIN:ZDB-GENE-040704-52"/>
<dbReference type="CTD" id="10244"/>
<dbReference type="ZFIN" id="ZDB-GENE-040704-52">
    <property type="gene designation" value="rabepk"/>
</dbReference>
<dbReference type="eggNOG" id="KOG0379">
    <property type="taxonomic scope" value="Eukaryota"/>
</dbReference>
<dbReference type="HOGENOM" id="CLU_045313_0_0_1"/>
<dbReference type="InParanoid" id="Q6GQN7"/>
<dbReference type="OMA" id="CTPGSIW"/>
<dbReference type="OrthoDB" id="10251809at2759"/>
<dbReference type="PhylomeDB" id="Q6GQN7"/>
<dbReference type="TreeFam" id="TF329153"/>
<dbReference type="PRO" id="PR:Q6GQN7"/>
<dbReference type="Proteomes" id="UP000000437">
    <property type="component" value="Chromosome 5"/>
</dbReference>
<dbReference type="Bgee" id="ENSDARG00000112165">
    <property type="expression patterns" value="Expressed in testis and 23 other cell types or tissues"/>
</dbReference>
<dbReference type="ExpressionAtlas" id="Q6GQN7">
    <property type="expression patterns" value="baseline"/>
</dbReference>
<dbReference type="Gene3D" id="2.120.10.80">
    <property type="entry name" value="Kelch-type beta propeller"/>
    <property type="match status" value="2"/>
</dbReference>
<dbReference type="InterPro" id="IPR011043">
    <property type="entry name" value="Gal_Oxase/kelch_b-propeller"/>
</dbReference>
<dbReference type="InterPro" id="IPR015915">
    <property type="entry name" value="Kelch-typ_b-propeller"/>
</dbReference>
<dbReference type="InterPro" id="IPR052124">
    <property type="entry name" value="Rab9_kelch_effector"/>
</dbReference>
<dbReference type="PANTHER" id="PTHR46647">
    <property type="entry name" value="RAB9 EFFECTOR PROTEIN WITH KELCH MOTIFS"/>
    <property type="match status" value="1"/>
</dbReference>
<dbReference type="PANTHER" id="PTHR46647:SF1">
    <property type="entry name" value="RAB9 EFFECTOR PROTEIN WITH KELCH MOTIFS"/>
    <property type="match status" value="1"/>
</dbReference>
<dbReference type="Pfam" id="PF24681">
    <property type="entry name" value="Kelch_KLHDC2_KLHL20_DRC7"/>
    <property type="match status" value="1"/>
</dbReference>
<dbReference type="SUPFAM" id="SSF50965">
    <property type="entry name" value="Galactose oxidase, central domain"/>
    <property type="match status" value="1"/>
</dbReference>
<organism>
    <name type="scientific">Danio rerio</name>
    <name type="common">Zebrafish</name>
    <name type="synonym">Brachydanio rerio</name>
    <dbReference type="NCBI Taxonomy" id="7955"/>
    <lineage>
        <taxon>Eukaryota</taxon>
        <taxon>Metazoa</taxon>
        <taxon>Chordata</taxon>
        <taxon>Craniata</taxon>
        <taxon>Vertebrata</taxon>
        <taxon>Euteleostomi</taxon>
        <taxon>Actinopterygii</taxon>
        <taxon>Neopterygii</taxon>
        <taxon>Teleostei</taxon>
        <taxon>Ostariophysi</taxon>
        <taxon>Cypriniformes</taxon>
        <taxon>Danionidae</taxon>
        <taxon>Danioninae</taxon>
        <taxon>Danio</taxon>
    </lineage>
</organism>